<dbReference type="EMBL" id="AP006716">
    <property type="protein sequence ID" value="BAE04650.1"/>
    <property type="molecule type" value="Genomic_DNA"/>
</dbReference>
<dbReference type="RefSeq" id="WP_000048060.1">
    <property type="nucleotide sequence ID" value="NC_007168.1"/>
</dbReference>
<dbReference type="SMR" id="Q4L6S5"/>
<dbReference type="GeneID" id="98345946"/>
<dbReference type="KEGG" id="sha:SH1341"/>
<dbReference type="eggNOG" id="COG0828">
    <property type="taxonomic scope" value="Bacteria"/>
</dbReference>
<dbReference type="HOGENOM" id="CLU_159258_3_2_9"/>
<dbReference type="OrthoDB" id="9799244at2"/>
<dbReference type="Proteomes" id="UP000000543">
    <property type="component" value="Chromosome"/>
</dbReference>
<dbReference type="GO" id="GO:1990904">
    <property type="term" value="C:ribonucleoprotein complex"/>
    <property type="evidence" value="ECO:0007669"/>
    <property type="project" value="UniProtKB-KW"/>
</dbReference>
<dbReference type="GO" id="GO:0005840">
    <property type="term" value="C:ribosome"/>
    <property type="evidence" value="ECO:0007669"/>
    <property type="project" value="UniProtKB-KW"/>
</dbReference>
<dbReference type="GO" id="GO:0003735">
    <property type="term" value="F:structural constituent of ribosome"/>
    <property type="evidence" value="ECO:0007669"/>
    <property type="project" value="InterPro"/>
</dbReference>
<dbReference type="GO" id="GO:0006412">
    <property type="term" value="P:translation"/>
    <property type="evidence" value="ECO:0007669"/>
    <property type="project" value="UniProtKB-UniRule"/>
</dbReference>
<dbReference type="Gene3D" id="1.20.5.1150">
    <property type="entry name" value="Ribosomal protein S8"/>
    <property type="match status" value="1"/>
</dbReference>
<dbReference type="HAMAP" id="MF_00358">
    <property type="entry name" value="Ribosomal_bS21"/>
    <property type="match status" value="1"/>
</dbReference>
<dbReference type="InterPro" id="IPR001911">
    <property type="entry name" value="Ribosomal_bS21"/>
</dbReference>
<dbReference type="InterPro" id="IPR018278">
    <property type="entry name" value="Ribosomal_bS21_CS"/>
</dbReference>
<dbReference type="InterPro" id="IPR038380">
    <property type="entry name" value="Ribosomal_bS21_sf"/>
</dbReference>
<dbReference type="NCBIfam" id="TIGR00030">
    <property type="entry name" value="S21p"/>
    <property type="match status" value="1"/>
</dbReference>
<dbReference type="PANTHER" id="PTHR21109">
    <property type="entry name" value="MITOCHONDRIAL 28S RIBOSOMAL PROTEIN S21"/>
    <property type="match status" value="1"/>
</dbReference>
<dbReference type="PANTHER" id="PTHR21109:SF22">
    <property type="entry name" value="SMALL RIBOSOMAL SUBUNIT PROTEIN BS21"/>
    <property type="match status" value="1"/>
</dbReference>
<dbReference type="Pfam" id="PF01165">
    <property type="entry name" value="Ribosomal_S21"/>
    <property type="match status" value="1"/>
</dbReference>
<dbReference type="PRINTS" id="PR00976">
    <property type="entry name" value="RIBOSOMALS21"/>
</dbReference>
<dbReference type="PROSITE" id="PS01181">
    <property type="entry name" value="RIBOSOMAL_S21"/>
    <property type="match status" value="1"/>
</dbReference>
<proteinExistence type="inferred from homology"/>
<accession>Q4L6S5</accession>
<organism>
    <name type="scientific">Staphylococcus haemolyticus (strain JCSC1435)</name>
    <dbReference type="NCBI Taxonomy" id="279808"/>
    <lineage>
        <taxon>Bacteria</taxon>
        <taxon>Bacillati</taxon>
        <taxon>Bacillota</taxon>
        <taxon>Bacilli</taxon>
        <taxon>Bacillales</taxon>
        <taxon>Staphylococcaceae</taxon>
        <taxon>Staphylococcus</taxon>
    </lineage>
</organism>
<protein>
    <recommendedName>
        <fullName evidence="1">Small ribosomal subunit protein bS21</fullName>
    </recommendedName>
    <alternativeName>
        <fullName evidence="2">30S ribosomal protein S21</fullName>
    </alternativeName>
</protein>
<sequence>MSKTVVRKNESLEDALRRFKRSVSKSGTIQEVRKREFYEKPSVKRKKKSEAARKRKFK</sequence>
<evidence type="ECO:0000255" key="1">
    <source>
        <dbReference type="HAMAP-Rule" id="MF_00358"/>
    </source>
</evidence>
<evidence type="ECO:0000305" key="2"/>
<comment type="similarity">
    <text evidence="1">Belongs to the bacterial ribosomal protein bS21 family.</text>
</comment>
<name>RS21_STAHJ</name>
<gene>
    <name evidence="1" type="primary">rpsU</name>
    <name type="ordered locus">SH1341</name>
</gene>
<feature type="chain" id="PRO_0000266774" description="Small ribosomal subunit protein bS21">
    <location>
        <begin position="1"/>
        <end position="58"/>
    </location>
</feature>
<keyword id="KW-0687">Ribonucleoprotein</keyword>
<keyword id="KW-0689">Ribosomal protein</keyword>
<reference key="1">
    <citation type="journal article" date="2005" name="J. Bacteriol.">
        <title>Whole-genome sequencing of Staphylococcus haemolyticus uncovers the extreme plasticity of its genome and the evolution of human-colonizing staphylococcal species.</title>
        <authorList>
            <person name="Takeuchi F."/>
            <person name="Watanabe S."/>
            <person name="Baba T."/>
            <person name="Yuzawa H."/>
            <person name="Ito T."/>
            <person name="Morimoto Y."/>
            <person name="Kuroda M."/>
            <person name="Cui L."/>
            <person name="Takahashi M."/>
            <person name="Ankai A."/>
            <person name="Baba S."/>
            <person name="Fukui S."/>
            <person name="Lee J.C."/>
            <person name="Hiramatsu K."/>
        </authorList>
    </citation>
    <scope>NUCLEOTIDE SEQUENCE [LARGE SCALE GENOMIC DNA]</scope>
    <source>
        <strain>JCSC1435</strain>
    </source>
</reference>